<reference key="1">
    <citation type="journal article" date="2015" name="PLoS ONE">
        <title>A genomics based discovery of secondary metabolite biosynthetic gene clusters in Aspergillus ustus.</title>
        <authorList>
            <person name="Pi B."/>
            <person name="Yu D."/>
            <person name="Dai F."/>
            <person name="Song X."/>
            <person name="Zhu C."/>
            <person name="Li H."/>
            <person name="Yu Y."/>
        </authorList>
    </citation>
    <scope>NUCLEOTIDE SEQUENCE [LARGE SCALE GENOMIC DNA]</scope>
    <scope>IDENTIFICATION</scope>
    <source>
        <strain>3.3904</strain>
    </source>
</reference>
<reference key="2">
    <citation type="journal article" date="2020" name="Nat. Commun.">
        <title>Oxepinamide F biosynthesis involves enzymatic D-aminoacyl epimerization, 3H-oxepin formation, and hydroxylation induced double bond migration.</title>
        <authorList>
            <person name="Zheng L."/>
            <person name="Wang H."/>
            <person name="Fan A."/>
            <person name="Li S.M."/>
        </authorList>
    </citation>
    <scope>FUNCTION</scope>
</reference>
<evidence type="ECO:0000250" key="1">
    <source>
        <dbReference type="UniProtKB" id="O04385"/>
    </source>
</evidence>
<evidence type="ECO:0000255" key="2">
    <source>
        <dbReference type="PROSITE-ProRule" id="PRU01020"/>
    </source>
</evidence>
<evidence type="ECO:0000269" key="3">
    <source>
    </source>
</evidence>
<evidence type="ECO:0000303" key="4">
    <source>
    </source>
</evidence>
<gene>
    <name evidence="4" type="primary">opaF</name>
    <name type="ORF">HK57_00060</name>
</gene>
<accession>A0A0C1E5J2</accession>
<proteinExistence type="inferred from homology"/>
<organism>
    <name type="scientific">Aspergillus ustus</name>
    <dbReference type="NCBI Taxonomy" id="40382"/>
    <lineage>
        <taxon>Eukaryota</taxon>
        <taxon>Fungi</taxon>
        <taxon>Dikarya</taxon>
        <taxon>Ascomycota</taxon>
        <taxon>Pezizomycotina</taxon>
        <taxon>Eurotiomycetes</taxon>
        <taxon>Eurotiomycetidae</taxon>
        <taxon>Eurotiales</taxon>
        <taxon>Aspergillaceae</taxon>
        <taxon>Aspergillus</taxon>
        <taxon>Aspergillus subgen. Nidulantes</taxon>
    </lineage>
</organism>
<feature type="chain" id="PRO_0000452998" description="O-methyltransferase opaF">
    <location>
        <begin position="1"/>
        <end position="420"/>
    </location>
</feature>
<feature type="active site" description="Proton acceptor" evidence="2">
    <location>
        <position position="328"/>
    </location>
</feature>
<feature type="binding site" evidence="1">
    <location>
        <begin position="262"/>
        <end position="263"/>
    </location>
    <ligand>
        <name>S-adenosyl-L-methionine</name>
        <dbReference type="ChEBI" id="CHEBI:59789"/>
    </ligand>
</feature>
<feature type="binding site" evidence="2">
    <location>
        <position position="287"/>
    </location>
    <ligand>
        <name>S-adenosyl-L-methionine</name>
        <dbReference type="ChEBI" id="CHEBI:59789"/>
    </ligand>
</feature>
<feature type="binding site" evidence="1">
    <location>
        <begin position="308"/>
        <end position="309"/>
    </location>
    <ligand>
        <name>S-adenosyl-L-methionine</name>
        <dbReference type="ChEBI" id="CHEBI:59789"/>
    </ligand>
</feature>
<sequence>MARGAAELTQTRKVMIKEQLANLTALIDLRIADTPCNGLDDDMPMQPAIDNTITHELAKETYALLHAIKGPSLSVFNFGEQVMHVSAVRALFGLGVFSALPQDRQAMTATALAEKLGCDEELLVRLMRMCTIWGPFKEVGTETYSHTQFSLAYLDPQVTNQFQAFVDEFLPACLQLHKFLEINNGKPPVDATNCPYTLAHQTSGKDMWEHLAQFPKRSKVVNSAMYAISSAHPWPVALYPFREALLQLPPTSSNAPLVIDIGGGQGQAISVIRKMCGGINGRFILEDRPEVLAGIPHTLRGIEKIECDLFKPQPVKGAAIYFLRHVLHDWAEDACVRILQNIASAITDKSTQRVVISEMVLPEKGVTAECATQDLVTLSTTGAERSRKQWERLIPAAGFRVENIYSSEASCEAAIECYLE</sequence>
<keyword id="KW-0489">Methyltransferase</keyword>
<keyword id="KW-1185">Reference proteome</keyword>
<keyword id="KW-0949">S-adenosyl-L-methionine</keyword>
<keyword id="KW-0808">Transferase</keyword>
<name>OPAF_ASPUT</name>
<dbReference type="EC" id="2.1.1.-" evidence="3"/>
<dbReference type="EMBL" id="JOMC01000153">
    <property type="protein sequence ID" value="KIA75453.1"/>
    <property type="molecule type" value="Genomic_DNA"/>
</dbReference>
<dbReference type="SMR" id="A0A0C1E5J2"/>
<dbReference type="Proteomes" id="UP000053475">
    <property type="component" value="Unassembled WGS sequence"/>
</dbReference>
<dbReference type="GO" id="GO:0008171">
    <property type="term" value="F:O-methyltransferase activity"/>
    <property type="evidence" value="ECO:0007669"/>
    <property type="project" value="InterPro"/>
</dbReference>
<dbReference type="GO" id="GO:0046983">
    <property type="term" value="F:protein dimerization activity"/>
    <property type="evidence" value="ECO:0007669"/>
    <property type="project" value="InterPro"/>
</dbReference>
<dbReference type="GO" id="GO:0032259">
    <property type="term" value="P:methylation"/>
    <property type="evidence" value="ECO:0007669"/>
    <property type="project" value="UniProtKB-KW"/>
</dbReference>
<dbReference type="GO" id="GO:0044550">
    <property type="term" value="P:secondary metabolite biosynthetic process"/>
    <property type="evidence" value="ECO:0007669"/>
    <property type="project" value="UniProtKB-ARBA"/>
</dbReference>
<dbReference type="Gene3D" id="3.40.50.150">
    <property type="entry name" value="Vaccinia Virus protein VP39"/>
    <property type="match status" value="1"/>
</dbReference>
<dbReference type="Gene3D" id="1.10.10.10">
    <property type="entry name" value="Winged helix-like DNA-binding domain superfamily/Winged helix DNA-binding domain"/>
    <property type="match status" value="1"/>
</dbReference>
<dbReference type="InterPro" id="IPR016461">
    <property type="entry name" value="COMT-like"/>
</dbReference>
<dbReference type="InterPro" id="IPR001077">
    <property type="entry name" value="O_MeTrfase_dom"/>
</dbReference>
<dbReference type="InterPro" id="IPR012967">
    <property type="entry name" value="Plant_O-MeTrfase_dimerisation"/>
</dbReference>
<dbReference type="InterPro" id="IPR029063">
    <property type="entry name" value="SAM-dependent_MTases_sf"/>
</dbReference>
<dbReference type="InterPro" id="IPR036388">
    <property type="entry name" value="WH-like_DNA-bd_sf"/>
</dbReference>
<dbReference type="InterPro" id="IPR036390">
    <property type="entry name" value="WH_DNA-bd_sf"/>
</dbReference>
<dbReference type="PANTHER" id="PTHR43712:SF1">
    <property type="entry name" value="HYPOTHETICAL O-METHYLTRANSFERASE (EUROFUNG)-RELATED"/>
    <property type="match status" value="1"/>
</dbReference>
<dbReference type="PANTHER" id="PTHR43712">
    <property type="entry name" value="PUTATIVE (AFU_ORTHOLOGUE AFUA_4G14580)-RELATED"/>
    <property type="match status" value="1"/>
</dbReference>
<dbReference type="Pfam" id="PF08100">
    <property type="entry name" value="Dimerisation"/>
    <property type="match status" value="1"/>
</dbReference>
<dbReference type="Pfam" id="PF00891">
    <property type="entry name" value="Methyltransf_2"/>
    <property type="match status" value="1"/>
</dbReference>
<dbReference type="SUPFAM" id="SSF53335">
    <property type="entry name" value="S-adenosyl-L-methionine-dependent methyltransferases"/>
    <property type="match status" value="1"/>
</dbReference>
<dbReference type="SUPFAM" id="SSF46785">
    <property type="entry name" value="Winged helix' DNA-binding domain"/>
    <property type="match status" value="1"/>
</dbReference>
<dbReference type="PROSITE" id="PS51683">
    <property type="entry name" value="SAM_OMT_II"/>
    <property type="match status" value="1"/>
</dbReference>
<protein>
    <recommendedName>
        <fullName evidence="4">O-methyltransferase opaF</fullName>
        <ecNumber evidence="3">2.1.1.-</ecNumber>
    </recommendedName>
    <alternativeName>
        <fullName evidence="4">Oxepinamide F biosynthesis cluster protein F</fullName>
    </alternativeName>
</protein>
<comment type="function">
    <text evidence="3">O-methyltransferase; part of the gene cluster that mediates the biosynthesis of oxepinamides, derivatives of anthranilyl-containing tripeptides that share an oxepin ring and a fused pyrimidinone moiety (PubMed:33004788). The nonribosomal peptide synthetase (NRPS) opaA assembles the quinazolinone core with D-Phe incorporation (PubMed:33004788). The first adenylation domain (A1) of opaA loads and activates anthranilic acid whereas the second A domain (A2) is for activating of L-Phe, which is then converted to D-form by the E domain (PubMed:33004788). The third A domain (A3) is responsible for L-Ile activation and the terminal condensation domain C3 for cyclization and releasing the NRPS product protuboxepin K (PubMed:33004788). The cytochrome P450 monooxygenase opaB then catalyzes alone the oxepin ring formation to convert protuboxepin K into protuboxepin A (PubMed:33004788). The flavoenzyme opaC installs subsequently one hydroxyl group at the oxepin ring, accompanied by double bond migration, to form 15-epi-oxepinamide E (PubMed:33004788). The epimerase opaE changes the D-Phe residue back to L-form, leading to oxepinamide E, which is further methylated at the hydroxyl group at C-12 by the O-methyltransferase OpaF to yield oxepinamide F (PubMed:33004788).</text>
</comment>
<comment type="pathway">
    <text evidence="3">Secondary metabolite biosynthesis.</text>
</comment>
<comment type="similarity">
    <text evidence="2">Belongs to the class I-like SAM-binding methyltransferase superfamily. Cation-independent O-methyltransferase family.</text>
</comment>